<feature type="chain" id="PRO_1000022610" description="ATP-dependent Clp protease adapter protein ClpS">
    <location>
        <begin position="1"/>
        <end position="105"/>
    </location>
</feature>
<gene>
    <name evidence="1" type="primary">clpS</name>
    <name type="ordered locus">KPN78578_08890</name>
    <name type="ORF">KPN_00914</name>
</gene>
<protein>
    <recommendedName>
        <fullName evidence="1">ATP-dependent Clp protease adapter protein ClpS</fullName>
    </recommendedName>
</protein>
<proteinExistence type="inferred from homology"/>
<name>CLPS_KLEP7</name>
<evidence type="ECO:0000255" key="1">
    <source>
        <dbReference type="HAMAP-Rule" id="MF_00302"/>
    </source>
</evidence>
<organism>
    <name type="scientific">Klebsiella pneumoniae subsp. pneumoniae (strain ATCC 700721 / MGH 78578)</name>
    <dbReference type="NCBI Taxonomy" id="272620"/>
    <lineage>
        <taxon>Bacteria</taxon>
        <taxon>Pseudomonadati</taxon>
        <taxon>Pseudomonadota</taxon>
        <taxon>Gammaproteobacteria</taxon>
        <taxon>Enterobacterales</taxon>
        <taxon>Enterobacteriaceae</taxon>
        <taxon>Klebsiella/Raoultella group</taxon>
        <taxon>Klebsiella</taxon>
        <taxon>Klebsiella pneumoniae complex</taxon>
    </lineage>
</organism>
<dbReference type="EMBL" id="CP000647">
    <property type="protein sequence ID" value="ABR76350.1"/>
    <property type="molecule type" value="Genomic_DNA"/>
</dbReference>
<dbReference type="RefSeq" id="WP_002896520.1">
    <property type="nucleotide sequence ID" value="NC_009648.1"/>
</dbReference>
<dbReference type="SMR" id="A6T6X9"/>
<dbReference type="STRING" id="272620.KPN_00914"/>
<dbReference type="PaxDb" id="272620-KPN_00914"/>
<dbReference type="EnsemblBacteria" id="ABR76350">
    <property type="protein sequence ID" value="ABR76350"/>
    <property type="gene ID" value="KPN_00914"/>
</dbReference>
<dbReference type="GeneID" id="93274156"/>
<dbReference type="KEGG" id="kpn:KPN_00914"/>
<dbReference type="HOGENOM" id="CLU_134358_2_1_6"/>
<dbReference type="Proteomes" id="UP000000265">
    <property type="component" value="Chromosome"/>
</dbReference>
<dbReference type="GO" id="GO:0030163">
    <property type="term" value="P:protein catabolic process"/>
    <property type="evidence" value="ECO:0007669"/>
    <property type="project" value="InterPro"/>
</dbReference>
<dbReference type="GO" id="GO:0006508">
    <property type="term" value="P:proteolysis"/>
    <property type="evidence" value="ECO:0007669"/>
    <property type="project" value="UniProtKB-UniRule"/>
</dbReference>
<dbReference type="FunFam" id="3.30.1390.10:FF:000002">
    <property type="entry name" value="ATP-dependent Clp protease adapter protein ClpS"/>
    <property type="match status" value="1"/>
</dbReference>
<dbReference type="Gene3D" id="3.30.1390.10">
    <property type="match status" value="1"/>
</dbReference>
<dbReference type="HAMAP" id="MF_00302">
    <property type="entry name" value="ClpS"/>
    <property type="match status" value="1"/>
</dbReference>
<dbReference type="InterPro" id="IPR022935">
    <property type="entry name" value="ClpS"/>
</dbReference>
<dbReference type="InterPro" id="IPR003769">
    <property type="entry name" value="ClpS_core"/>
</dbReference>
<dbReference type="InterPro" id="IPR014719">
    <property type="entry name" value="Ribosomal_bL12_C/ClpS-like"/>
</dbReference>
<dbReference type="NCBIfam" id="NF000670">
    <property type="entry name" value="PRK00033.1-3"/>
    <property type="match status" value="1"/>
</dbReference>
<dbReference type="NCBIfam" id="NF000672">
    <property type="entry name" value="PRK00033.1-5"/>
    <property type="match status" value="1"/>
</dbReference>
<dbReference type="PANTHER" id="PTHR33473:SF19">
    <property type="entry name" value="ATP-DEPENDENT CLP PROTEASE ADAPTER PROTEIN CLPS"/>
    <property type="match status" value="1"/>
</dbReference>
<dbReference type="PANTHER" id="PTHR33473">
    <property type="entry name" value="ATP-DEPENDENT CLP PROTEASE ADAPTER PROTEIN CLPS1, CHLOROPLASTIC"/>
    <property type="match status" value="1"/>
</dbReference>
<dbReference type="Pfam" id="PF02617">
    <property type="entry name" value="ClpS"/>
    <property type="match status" value="1"/>
</dbReference>
<dbReference type="SUPFAM" id="SSF54736">
    <property type="entry name" value="ClpS-like"/>
    <property type="match status" value="1"/>
</dbReference>
<reference key="1">
    <citation type="submission" date="2006-09" db="EMBL/GenBank/DDBJ databases">
        <authorList>
            <consortium name="The Klebsiella pneumonia Genome Sequencing Project"/>
            <person name="McClelland M."/>
            <person name="Sanderson E.K."/>
            <person name="Spieth J."/>
            <person name="Clifton W.S."/>
            <person name="Latreille P."/>
            <person name="Sabo A."/>
            <person name="Pepin K."/>
            <person name="Bhonagiri V."/>
            <person name="Porwollik S."/>
            <person name="Ali J."/>
            <person name="Wilson R.K."/>
        </authorList>
    </citation>
    <scope>NUCLEOTIDE SEQUENCE [LARGE SCALE GENOMIC DNA]</scope>
    <source>
        <strain>ATCC 700721 / MGH 78578</strain>
    </source>
</reference>
<accession>A6T6X9</accession>
<sequence>MSKRDWLDFEHLVDDEVRDAIKPPSMYKVILVNDDYTPMEFVIDVLQKFFSYDVERATQLMLTVHYEGKAICGVFTAEVAETKVAMVNQYARENEHPLLCTLEKA</sequence>
<comment type="function">
    <text evidence="1">Involved in the modulation of the specificity of the ClpAP-mediated ATP-dependent protein degradation.</text>
</comment>
<comment type="subunit">
    <text evidence="1">Binds to the N-terminal domain of the chaperone ClpA.</text>
</comment>
<comment type="similarity">
    <text evidence="1">Belongs to the ClpS family.</text>
</comment>